<gene>
    <name type="ordered locus">At2g33270</name>
    <name type="ORF">F4P9.4</name>
</gene>
<name>TRL13_ARATH</name>
<evidence type="ECO:0000255" key="1"/>
<evidence type="ECO:0000255" key="2">
    <source>
        <dbReference type="PROSITE-ProRule" id="PRU00691"/>
    </source>
</evidence>
<evidence type="ECO:0000269" key="3">
    <source>
    </source>
</evidence>
<evidence type="ECO:0000305" key="4"/>
<feature type="transit peptide" description="Chloroplast" evidence="1">
    <location>
        <begin position="1"/>
        <end position="44"/>
    </location>
</feature>
<feature type="chain" id="PRO_0000034171" description="Thioredoxin-like 1-3, chloroplastic">
    <location>
        <begin position="45"/>
        <end position="273"/>
    </location>
</feature>
<feature type="domain" description="Thioredoxin" evidence="2">
    <location>
        <begin position="62"/>
        <end position="202"/>
    </location>
</feature>
<feature type="active site" description="Nucleophile" evidence="1">
    <location>
        <position position="125"/>
    </location>
</feature>
<feature type="active site" description="Nucleophile" evidence="1">
    <location>
        <position position="128"/>
    </location>
</feature>
<feature type="disulfide bond" description="Redox-active" evidence="2">
    <location>
        <begin position="125"/>
        <end position="128"/>
    </location>
</feature>
<reference key="1">
    <citation type="journal article" date="1999" name="Nature">
        <title>Sequence and analysis of chromosome 2 of the plant Arabidopsis thaliana.</title>
        <authorList>
            <person name="Lin X."/>
            <person name="Kaul S."/>
            <person name="Rounsley S.D."/>
            <person name="Shea T.P."/>
            <person name="Benito M.-I."/>
            <person name="Town C.D."/>
            <person name="Fujii C.Y."/>
            <person name="Mason T.M."/>
            <person name="Bowman C.L."/>
            <person name="Barnstead M.E."/>
            <person name="Feldblyum T.V."/>
            <person name="Buell C.R."/>
            <person name="Ketchum K.A."/>
            <person name="Lee J.J."/>
            <person name="Ronning C.M."/>
            <person name="Koo H.L."/>
            <person name="Moffat K.S."/>
            <person name="Cronin L.A."/>
            <person name="Shen M."/>
            <person name="Pai G."/>
            <person name="Van Aken S."/>
            <person name="Umayam L."/>
            <person name="Tallon L.J."/>
            <person name="Gill J.E."/>
            <person name="Adams M.D."/>
            <person name="Carrera A.J."/>
            <person name="Creasy T.H."/>
            <person name="Goodman H.M."/>
            <person name="Somerville C.R."/>
            <person name="Copenhaver G.P."/>
            <person name="Preuss D."/>
            <person name="Nierman W.C."/>
            <person name="White O."/>
            <person name="Eisen J.A."/>
            <person name="Salzberg S.L."/>
            <person name="Fraser C.M."/>
            <person name="Venter J.C."/>
        </authorList>
    </citation>
    <scope>NUCLEOTIDE SEQUENCE [LARGE SCALE GENOMIC DNA]</scope>
    <source>
        <strain>cv. Columbia</strain>
    </source>
</reference>
<reference key="2">
    <citation type="journal article" date="2017" name="Plant J.">
        <title>Araport11: a complete reannotation of the Arabidopsis thaliana reference genome.</title>
        <authorList>
            <person name="Cheng C.Y."/>
            <person name="Krishnakumar V."/>
            <person name="Chan A.P."/>
            <person name="Thibaud-Nissen F."/>
            <person name="Schobel S."/>
            <person name="Town C.D."/>
        </authorList>
    </citation>
    <scope>GENOME REANNOTATION</scope>
    <source>
        <strain>cv. Columbia</strain>
    </source>
</reference>
<reference key="3">
    <citation type="submission" date="2005-05" db="EMBL/GenBank/DDBJ databases">
        <authorList>
            <person name="Underwood B.A."/>
            <person name="Xiao Y.-L."/>
            <person name="Moskal W.A. Jr."/>
            <person name="Monaghan E.L."/>
            <person name="Wang W."/>
            <person name="Redman J.C."/>
            <person name="Wu H.C."/>
            <person name="Utterback T."/>
            <person name="Town C.D."/>
        </authorList>
    </citation>
    <scope>NUCLEOTIDE SEQUENCE [LARGE SCALE MRNA]</scope>
    <source>
        <strain>cv. Columbia</strain>
    </source>
</reference>
<reference key="4">
    <citation type="journal article" date="2009" name="Mol. Plant">
        <title>Comparative genomic study of the thioredoxin family in photosynthetic organisms with emphasis on Populus trichocarpa.</title>
        <authorList>
            <person name="Chibani K."/>
            <person name="Wingsle G."/>
            <person name="Jacquot J.P."/>
            <person name="Gelhaye E."/>
            <person name="Rouhier N."/>
        </authorList>
    </citation>
    <scope>GENE FAMILY</scope>
    <scope>NOMENCLATURE</scope>
</reference>
<reference key="5">
    <citation type="journal article" date="2009" name="Plant Physiol.">
        <title>A small family of chloroplast atypical thioredoxins.</title>
        <authorList>
            <person name="Dangoor I."/>
            <person name="Peled-Zehavi H."/>
            <person name="Levitan A."/>
            <person name="Pasand O."/>
            <person name="Danon A."/>
        </authorList>
    </citation>
    <scope>SUBCELLULAR LOCATION</scope>
</reference>
<keyword id="KW-0150">Chloroplast</keyword>
<keyword id="KW-1015">Disulfide bond</keyword>
<keyword id="KW-0249">Electron transport</keyword>
<keyword id="KW-0934">Plastid</keyword>
<keyword id="KW-0676">Redox-active center</keyword>
<keyword id="KW-1185">Reference proteome</keyword>
<keyword id="KW-0809">Transit peptide</keyword>
<keyword id="KW-0813">Transport</keyword>
<organism>
    <name type="scientific">Arabidopsis thaliana</name>
    <name type="common">Mouse-ear cress</name>
    <dbReference type="NCBI Taxonomy" id="3702"/>
    <lineage>
        <taxon>Eukaryota</taxon>
        <taxon>Viridiplantae</taxon>
        <taxon>Streptophyta</taxon>
        <taxon>Embryophyta</taxon>
        <taxon>Tracheophyta</taxon>
        <taxon>Spermatophyta</taxon>
        <taxon>Magnoliopsida</taxon>
        <taxon>eudicotyledons</taxon>
        <taxon>Gunneridae</taxon>
        <taxon>Pentapetalae</taxon>
        <taxon>rosids</taxon>
        <taxon>malvids</taxon>
        <taxon>Brassicales</taxon>
        <taxon>Brassicaceae</taxon>
        <taxon>Camelineae</taxon>
        <taxon>Arabidopsis</taxon>
    </lineage>
</organism>
<protein>
    <recommendedName>
        <fullName>Thioredoxin-like 1-3, chloroplastic</fullName>
    </recommendedName>
    <alternativeName>
        <fullName>Atypical cysteine/histidine-rich thioredoxin 3</fullName>
        <shortName>AtACHT3</shortName>
    </alternativeName>
    <alternativeName>
        <fullName>Lilium-type thioredoxin 1-3</fullName>
    </alternativeName>
</protein>
<proteinExistence type="evidence at transcript level"/>
<sequence>MATDSFIKLNPISFNRARFDLRDFAGISPKSISSLCCISPRLISCNHFSPRTLISGENGNILFSKKKIPAFVRCQTSLGIGRNQKWWEKELKPNMKSVTSPQDLVVSLRNAGDKLVVVDFFSPSCGGCKALHPKICKIAEKNPEVEFLQVNYEEHRSLCQSLNIHVLPFFRFYRGSSGRVCSFSCTNATIRKFKEALEKHGREQCSIGETKGLEEKELVAMAANKDLSFDYKPTSCGNIQEQKKKEIFLPKSPTFNKQKEVEHSLLLVSPAPA</sequence>
<comment type="function">
    <text>Probable thiol-disulfide oxidoreductase that may participate in various redox reactions.</text>
</comment>
<comment type="subcellular location">
    <subcellularLocation>
        <location evidence="3">Plastid</location>
        <location evidence="3">Chloroplast</location>
    </subcellularLocation>
</comment>
<comment type="similarity">
    <text evidence="4">Belongs to the thioredoxin family.</text>
</comment>
<comment type="caution">
    <text evidence="4">The active site contains a CGGC motif which differs from the conserved CGPC motif.</text>
</comment>
<dbReference type="EMBL" id="AC002332">
    <property type="protein sequence ID" value="AAB80645.1"/>
    <property type="molecule type" value="Genomic_DNA"/>
</dbReference>
<dbReference type="EMBL" id="CP002685">
    <property type="protein sequence ID" value="AEC08808.1"/>
    <property type="molecule type" value="Genomic_DNA"/>
</dbReference>
<dbReference type="EMBL" id="DQ056563">
    <property type="protein sequence ID" value="AAY78713.1"/>
    <property type="molecule type" value="mRNA"/>
</dbReference>
<dbReference type="PIR" id="D84743">
    <property type="entry name" value="D84743"/>
</dbReference>
<dbReference type="SMR" id="O22779"/>
<dbReference type="BioGRID" id="3237">
    <property type="interactions" value="1"/>
</dbReference>
<dbReference type="FunCoup" id="O22779">
    <property type="interactions" value="3"/>
</dbReference>
<dbReference type="IntAct" id="O22779">
    <property type="interactions" value="1"/>
</dbReference>
<dbReference type="STRING" id="3702.O22779"/>
<dbReference type="PaxDb" id="3702-AT2G33270.1"/>
<dbReference type="EnsemblPlants" id="AT2G33270.1">
    <property type="protein sequence ID" value="AT2G33270.1"/>
    <property type="gene ID" value="AT2G33270"/>
</dbReference>
<dbReference type="GeneID" id="817890"/>
<dbReference type="Gramene" id="AT2G33270.1">
    <property type="protein sequence ID" value="AT2G33270.1"/>
    <property type="gene ID" value="AT2G33270"/>
</dbReference>
<dbReference type="KEGG" id="ath:AT2G33270"/>
<dbReference type="Araport" id="AT2G33270"/>
<dbReference type="TAIR" id="AT2G33270">
    <property type="gene designation" value="ACHT3"/>
</dbReference>
<dbReference type="eggNOG" id="KOG0907">
    <property type="taxonomic scope" value="Eukaryota"/>
</dbReference>
<dbReference type="HOGENOM" id="CLU_967554_0_0_1"/>
<dbReference type="InParanoid" id="O22779"/>
<dbReference type="OMA" id="CEFMATD"/>
<dbReference type="OrthoDB" id="2121326at2759"/>
<dbReference type="PhylomeDB" id="O22779"/>
<dbReference type="PRO" id="PR:O22779"/>
<dbReference type="Proteomes" id="UP000006548">
    <property type="component" value="Chromosome 2"/>
</dbReference>
<dbReference type="ExpressionAtlas" id="O22779">
    <property type="expression patterns" value="baseline and differential"/>
</dbReference>
<dbReference type="GO" id="GO:0009507">
    <property type="term" value="C:chloroplast"/>
    <property type="evidence" value="ECO:0000314"/>
    <property type="project" value="TAIR"/>
</dbReference>
<dbReference type="CDD" id="cd02947">
    <property type="entry name" value="TRX_family"/>
    <property type="match status" value="1"/>
</dbReference>
<dbReference type="FunFam" id="3.40.30.10:FF:000199">
    <property type="entry name" value="Thioredoxin-like 1-2, chloroplastic"/>
    <property type="match status" value="1"/>
</dbReference>
<dbReference type="Gene3D" id="3.40.30.10">
    <property type="entry name" value="Glutaredoxin"/>
    <property type="match status" value="1"/>
</dbReference>
<dbReference type="InterPro" id="IPR036249">
    <property type="entry name" value="Thioredoxin-like_sf"/>
</dbReference>
<dbReference type="InterPro" id="IPR013766">
    <property type="entry name" value="Thioredoxin_domain"/>
</dbReference>
<dbReference type="PANTHER" id="PTHR43601">
    <property type="entry name" value="THIOREDOXIN, MITOCHONDRIAL"/>
    <property type="match status" value="1"/>
</dbReference>
<dbReference type="PANTHER" id="PTHR43601:SF31">
    <property type="entry name" value="THIOREDOXIN-LIKE 1-3, CHLOROPLASTIC"/>
    <property type="match status" value="1"/>
</dbReference>
<dbReference type="Pfam" id="PF00085">
    <property type="entry name" value="Thioredoxin"/>
    <property type="match status" value="1"/>
</dbReference>
<dbReference type="SUPFAM" id="SSF52833">
    <property type="entry name" value="Thioredoxin-like"/>
    <property type="match status" value="1"/>
</dbReference>
<dbReference type="PROSITE" id="PS51352">
    <property type="entry name" value="THIOREDOXIN_2"/>
    <property type="match status" value="1"/>
</dbReference>
<accession>O22779</accession>
<accession>Q4PSS3</accession>